<reference key="1">
    <citation type="journal article" date="2008" name="PLoS ONE">
        <title>An optimized chloroplast DNA extraction protocol for grasses (Poaceae) proves suitable for whole plastid genome sequencing and SNP detection.</title>
        <authorList>
            <person name="Diekmann K."/>
            <person name="Hodkinson T.R."/>
            <person name="Fricke E."/>
            <person name="Barth S."/>
        </authorList>
    </citation>
    <scope>NUCLEOTIDE SEQUENCE [LARGE SCALE GENOMIC DNA]</scope>
    <source>
        <strain>cv. Cashel</strain>
    </source>
</reference>
<comment type="function">
    <text evidence="1">RuBisCO catalyzes two reactions: the carboxylation of D-ribulose 1,5-bisphosphate, the primary event in carbon dioxide fixation, as well as the oxidative fragmentation of the pentose substrate in the photorespiration process. Both reactions occur simultaneously and in competition at the same active site.</text>
</comment>
<comment type="catalytic activity">
    <reaction evidence="1">
        <text>2 (2R)-3-phosphoglycerate + 2 H(+) = D-ribulose 1,5-bisphosphate + CO2 + H2O</text>
        <dbReference type="Rhea" id="RHEA:23124"/>
        <dbReference type="ChEBI" id="CHEBI:15377"/>
        <dbReference type="ChEBI" id="CHEBI:15378"/>
        <dbReference type="ChEBI" id="CHEBI:16526"/>
        <dbReference type="ChEBI" id="CHEBI:57870"/>
        <dbReference type="ChEBI" id="CHEBI:58272"/>
        <dbReference type="EC" id="4.1.1.39"/>
    </reaction>
</comment>
<comment type="catalytic activity">
    <reaction evidence="1">
        <text>D-ribulose 1,5-bisphosphate + O2 = 2-phosphoglycolate + (2R)-3-phosphoglycerate + 2 H(+)</text>
        <dbReference type="Rhea" id="RHEA:36631"/>
        <dbReference type="ChEBI" id="CHEBI:15378"/>
        <dbReference type="ChEBI" id="CHEBI:15379"/>
        <dbReference type="ChEBI" id="CHEBI:57870"/>
        <dbReference type="ChEBI" id="CHEBI:58033"/>
        <dbReference type="ChEBI" id="CHEBI:58272"/>
    </reaction>
</comment>
<comment type="cofactor">
    <cofactor evidence="1">
        <name>Mg(2+)</name>
        <dbReference type="ChEBI" id="CHEBI:18420"/>
    </cofactor>
    <text evidence="1">Binds 1 Mg(2+) ion per subunit.</text>
</comment>
<comment type="subunit">
    <text evidence="1">Heterohexadecamer of 8 large chains and 8 small chains; disulfide-linked. The disulfide link is formed within the large subunit homodimers.</text>
</comment>
<comment type="subcellular location">
    <subcellularLocation>
        <location>Plastid</location>
        <location>Chloroplast</location>
    </subcellularLocation>
</comment>
<comment type="PTM">
    <text evidence="1">The disulfide bond which can form in the large chain dimeric partners within the hexadecamer appears to be associated with oxidative stress and protein turnover.</text>
</comment>
<comment type="miscellaneous">
    <text evidence="1">The basic functional RuBisCO is composed of a large chain homodimer in a 'head-to-tail' conformation. In form I RuBisCO this homodimer is arranged in a barrel-like tetramer with the small subunits forming a tetrameric 'cap' on each end of the 'barrel'.</text>
</comment>
<comment type="similarity">
    <text evidence="1">Belongs to the RuBisCO large chain family. Type I subfamily.</text>
</comment>
<feature type="propeptide" id="PRO_0000355786" evidence="1">
    <location>
        <begin position="1"/>
        <end position="2"/>
    </location>
</feature>
<feature type="chain" id="PRO_0000355787" description="Ribulose bisphosphate carboxylase large chain">
    <location>
        <begin position="3"/>
        <end position="477"/>
    </location>
</feature>
<feature type="active site" description="Proton acceptor" evidence="1">
    <location>
        <position position="175"/>
    </location>
</feature>
<feature type="active site" description="Proton acceptor" evidence="1">
    <location>
        <position position="294"/>
    </location>
</feature>
<feature type="binding site" description="in homodimeric partner" evidence="1">
    <location>
        <position position="123"/>
    </location>
    <ligand>
        <name>substrate</name>
    </ligand>
</feature>
<feature type="binding site" evidence="1">
    <location>
        <position position="173"/>
    </location>
    <ligand>
        <name>substrate</name>
    </ligand>
</feature>
<feature type="binding site" evidence="1">
    <location>
        <position position="177"/>
    </location>
    <ligand>
        <name>substrate</name>
    </ligand>
</feature>
<feature type="binding site" description="via carbamate group" evidence="1">
    <location>
        <position position="201"/>
    </location>
    <ligand>
        <name>Mg(2+)</name>
        <dbReference type="ChEBI" id="CHEBI:18420"/>
    </ligand>
</feature>
<feature type="binding site" evidence="1">
    <location>
        <position position="203"/>
    </location>
    <ligand>
        <name>Mg(2+)</name>
        <dbReference type="ChEBI" id="CHEBI:18420"/>
    </ligand>
</feature>
<feature type="binding site" evidence="1">
    <location>
        <position position="204"/>
    </location>
    <ligand>
        <name>Mg(2+)</name>
        <dbReference type="ChEBI" id="CHEBI:18420"/>
    </ligand>
</feature>
<feature type="binding site" evidence="1">
    <location>
        <position position="295"/>
    </location>
    <ligand>
        <name>substrate</name>
    </ligand>
</feature>
<feature type="binding site" evidence="1">
    <location>
        <position position="327"/>
    </location>
    <ligand>
        <name>substrate</name>
    </ligand>
</feature>
<feature type="binding site" evidence="1">
    <location>
        <position position="379"/>
    </location>
    <ligand>
        <name>substrate</name>
    </ligand>
</feature>
<feature type="site" description="Transition state stabilizer" evidence="1">
    <location>
        <position position="334"/>
    </location>
</feature>
<feature type="modified residue" description="N-acetylproline" evidence="1">
    <location>
        <position position="3"/>
    </location>
</feature>
<feature type="modified residue" description="N6-carboxylysine" evidence="1">
    <location>
        <position position="201"/>
    </location>
</feature>
<feature type="disulfide bond" description="Interchain; in linked form" evidence="1">
    <location>
        <position position="247"/>
    </location>
</feature>
<keyword id="KW-0007">Acetylation</keyword>
<keyword id="KW-0113">Calvin cycle</keyword>
<keyword id="KW-0120">Carbon dioxide fixation</keyword>
<keyword id="KW-0150">Chloroplast</keyword>
<keyword id="KW-1015">Disulfide bond</keyword>
<keyword id="KW-0456">Lyase</keyword>
<keyword id="KW-0460">Magnesium</keyword>
<keyword id="KW-0479">Metal-binding</keyword>
<keyword id="KW-0503">Monooxygenase</keyword>
<keyword id="KW-0560">Oxidoreductase</keyword>
<keyword id="KW-0601">Photorespiration</keyword>
<keyword id="KW-0602">Photosynthesis</keyword>
<keyword id="KW-0934">Plastid</keyword>
<protein>
    <recommendedName>
        <fullName evidence="1">Ribulose bisphosphate carboxylase large chain</fullName>
        <shortName evidence="1">RuBisCO large subunit</shortName>
        <ecNumber evidence="1">4.1.1.39</ecNumber>
    </recommendedName>
</protein>
<gene>
    <name evidence="1" type="primary">rbcL</name>
    <name type="ordered locus">LopeCp048</name>
</gene>
<name>RBL_LOLPR</name>
<geneLocation type="chloroplast"/>
<proteinExistence type="inferred from homology"/>
<evidence type="ECO:0000255" key="1">
    <source>
        <dbReference type="HAMAP-Rule" id="MF_01338"/>
    </source>
</evidence>
<dbReference type="EC" id="4.1.1.39" evidence="1"/>
<dbReference type="EMBL" id="AM777385">
    <property type="protein sequence ID" value="CAO85984.1"/>
    <property type="molecule type" value="Genomic_DNA"/>
</dbReference>
<dbReference type="RefSeq" id="YP_001531291.1">
    <property type="nucleotide sequence ID" value="NC_009950.1"/>
</dbReference>
<dbReference type="SMR" id="A8Y9H8"/>
<dbReference type="GeneID" id="5696636"/>
<dbReference type="KEGG" id="lper:5696636"/>
<dbReference type="GO" id="GO:0009507">
    <property type="term" value="C:chloroplast"/>
    <property type="evidence" value="ECO:0007669"/>
    <property type="project" value="UniProtKB-SubCell"/>
</dbReference>
<dbReference type="GO" id="GO:0000287">
    <property type="term" value="F:magnesium ion binding"/>
    <property type="evidence" value="ECO:0007669"/>
    <property type="project" value="UniProtKB-UniRule"/>
</dbReference>
<dbReference type="GO" id="GO:0004497">
    <property type="term" value="F:monooxygenase activity"/>
    <property type="evidence" value="ECO:0007669"/>
    <property type="project" value="UniProtKB-KW"/>
</dbReference>
<dbReference type="GO" id="GO:0016984">
    <property type="term" value="F:ribulose-bisphosphate carboxylase activity"/>
    <property type="evidence" value="ECO:0007669"/>
    <property type="project" value="UniProtKB-UniRule"/>
</dbReference>
<dbReference type="GO" id="GO:0009853">
    <property type="term" value="P:photorespiration"/>
    <property type="evidence" value="ECO:0007669"/>
    <property type="project" value="UniProtKB-KW"/>
</dbReference>
<dbReference type="GO" id="GO:0019253">
    <property type="term" value="P:reductive pentose-phosphate cycle"/>
    <property type="evidence" value="ECO:0007669"/>
    <property type="project" value="UniProtKB-UniRule"/>
</dbReference>
<dbReference type="CDD" id="cd08212">
    <property type="entry name" value="RuBisCO_large_I"/>
    <property type="match status" value="1"/>
</dbReference>
<dbReference type="FunFam" id="3.20.20.110:FF:000001">
    <property type="entry name" value="Ribulose bisphosphate carboxylase large chain"/>
    <property type="match status" value="1"/>
</dbReference>
<dbReference type="FunFam" id="3.30.70.150:FF:000001">
    <property type="entry name" value="Ribulose bisphosphate carboxylase large chain"/>
    <property type="match status" value="1"/>
</dbReference>
<dbReference type="Gene3D" id="3.20.20.110">
    <property type="entry name" value="Ribulose bisphosphate carboxylase, large subunit, C-terminal domain"/>
    <property type="match status" value="1"/>
</dbReference>
<dbReference type="Gene3D" id="3.30.70.150">
    <property type="entry name" value="RuBisCO large subunit, N-terminal domain"/>
    <property type="match status" value="1"/>
</dbReference>
<dbReference type="HAMAP" id="MF_01338">
    <property type="entry name" value="RuBisCO_L_type1"/>
    <property type="match status" value="1"/>
</dbReference>
<dbReference type="InterPro" id="IPR033966">
    <property type="entry name" value="RuBisCO"/>
</dbReference>
<dbReference type="InterPro" id="IPR020878">
    <property type="entry name" value="RuBisCo_large_chain_AS"/>
</dbReference>
<dbReference type="InterPro" id="IPR000685">
    <property type="entry name" value="RuBisCO_lsu_C"/>
</dbReference>
<dbReference type="InterPro" id="IPR036376">
    <property type="entry name" value="RuBisCO_lsu_C_sf"/>
</dbReference>
<dbReference type="InterPro" id="IPR017443">
    <property type="entry name" value="RuBisCO_lsu_fd_N"/>
</dbReference>
<dbReference type="InterPro" id="IPR036422">
    <property type="entry name" value="RuBisCO_lsu_N_sf"/>
</dbReference>
<dbReference type="InterPro" id="IPR020888">
    <property type="entry name" value="RuBisCO_lsuI"/>
</dbReference>
<dbReference type="NCBIfam" id="NF003252">
    <property type="entry name" value="PRK04208.1"/>
    <property type="match status" value="1"/>
</dbReference>
<dbReference type="PANTHER" id="PTHR42704">
    <property type="entry name" value="RIBULOSE BISPHOSPHATE CARBOXYLASE"/>
    <property type="match status" value="1"/>
</dbReference>
<dbReference type="PANTHER" id="PTHR42704:SF16">
    <property type="entry name" value="RIBULOSE BISPHOSPHATE CARBOXYLASE LARGE CHAIN"/>
    <property type="match status" value="1"/>
</dbReference>
<dbReference type="Pfam" id="PF00016">
    <property type="entry name" value="RuBisCO_large"/>
    <property type="match status" value="1"/>
</dbReference>
<dbReference type="Pfam" id="PF02788">
    <property type="entry name" value="RuBisCO_large_N"/>
    <property type="match status" value="1"/>
</dbReference>
<dbReference type="SFLD" id="SFLDG01052">
    <property type="entry name" value="RuBisCO"/>
    <property type="match status" value="1"/>
</dbReference>
<dbReference type="SFLD" id="SFLDS00014">
    <property type="entry name" value="RuBisCO"/>
    <property type="match status" value="1"/>
</dbReference>
<dbReference type="SFLD" id="SFLDG00301">
    <property type="entry name" value="RuBisCO-like_proteins"/>
    <property type="match status" value="1"/>
</dbReference>
<dbReference type="SUPFAM" id="SSF51649">
    <property type="entry name" value="RuBisCo, C-terminal domain"/>
    <property type="match status" value="1"/>
</dbReference>
<dbReference type="SUPFAM" id="SSF54966">
    <property type="entry name" value="RuBisCO, large subunit, small (N-terminal) domain"/>
    <property type="match status" value="1"/>
</dbReference>
<dbReference type="PROSITE" id="PS00157">
    <property type="entry name" value="RUBISCO_LARGE"/>
    <property type="match status" value="1"/>
</dbReference>
<sequence>MSPQTETKASVGFQAGVKDYKLTYYTPEYETKDTDILAAFRVTPQPGVPPEEAGAAVAAESSTGTWTTVWTDGLTSLDRYKGRCYHIEPVAGEDNQWICYVAYPLDLFEEGSVTNMFTSIVGNVFGFKALRALRLEDLRIPVAYSKTFQGPPHGIQVERDKLNKYGRPLLGCTIKPKLGLSAKNYGRACYECLRGGLDFTKDDENVNSQPFMRWRDRFVFCAEALYKAQAETGEIKGHYLNATAGTCEEMIKRAVFARELGVPIVMHDYITGGFTANTSLAHYCRDNGLLLHIHRAMHAVIDRQKNHGMHFRVLAKALRMSGGDHIHSGTVVGKLEGEREMTLGFVDLLRDDFIEKDRARGIFFTQDWASMPGVIPVASGGIHVWHMPALTEIFGDDSVLQFGGGTLGHPWGNAPGAAANRVALEACVQARNEGRDLAREGNEIIRAACKWSPELAAACEVWKAIKFEFEPVDTIDN</sequence>
<accession>A8Y9H8</accession>
<organism>
    <name type="scientific">Lolium perenne</name>
    <name type="common">Perennial ryegrass</name>
    <dbReference type="NCBI Taxonomy" id="4522"/>
    <lineage>
        <taxon>Eukaryota</taxon>
        <taxon>Viridiplantae</taxon>
        <taxon>Streptophyta</taxon>
        <taxon>Embryophyta</taxon>
        <taxon>Tracheophyta</taxon>
        <taxon>Spermatophyta</taxon>
        <taxon>Magnoliopsida</taxon>
        <taxon>Liliopsida</taxon>
        <taxon>Poales</taxon>
        <taxon>Poaceae</taxon>
        <taxon>BOP clade</taxon>
        <taxon>Pooideae</taxon>
        <taxon>Poodae</taxon>
        <taxon>Poeae</taxon>
        <taxon>Poeae Chloroplast Group 2 (Poeae type)</taxon>
        <taxon>Loliodinae</taxon>
        <taxon>Loliinae</taxon>
        <taxon>Lolium</taxon>
    </lineage>
</organism>